<gene>
    <name type="primary">RSM25</name>
    <name type="ordered locus">YALI0D03916g</name>
</gene>
<proteinExistence type="inferred from homology"/>
<reference key="1">
    <citation type="journal article" date="2004" name="Nature">
        <title>Genome evolution in yeasts.</title>
        <authorList>
            <person name="Dujon B."/>
            <person name="Sherman D."/>
            <person name="Fischer G."/>
            <person name="Durrens P."/>
            <person name="Casaregola S."/>
            <person name="Lafontaine I."/>
            <person name="de Montigny J."/>
            <person name="Marck C."/>
            <person name="Neuveglise C."/>
            <person name="Talla E."/>
            <person name="Goffard N."/>
            <person name="Frangeul L."/>
            <person name="Aigle M."/>
            <person name="Anthouard V."/>
            <person name="Babour A."/>
            <person name="Barbe V."/>
            <person name="Barnay S."/>
            <person name="Blanchin S."/>
            <person name="Beckerich J.-M."/>
            <person name="Beyne E."/>
            <person name="Bleykasten C."/>
            <person name="Boisrame A."/>
            <person name="Boyer J."/>
            <person name="Cattolico L."/>
            <person name="Confanioleri F."/>
            <person name="de Daruvar A."/>
            <person name="Despons L."/>
            <person name="Fabre E."/>
            <person name="Fairhead C."/>
            <person name="Ferry-Dumazet H."/>
            <person name="Groppi A."/>
            <person name="Hantraye F."/>
            <person name="Hennequin C."/>
            <person name="Jauniaux N."/>
            <person name="Joyet P."/>
            <person name="Kachouri R."/>
            <person name="Kerrest A."/>
            <person name="Koszul R."/>
            <person name="Lemaire M."/>
            <person name="Lesur I."/>
            <person name="Ma L."/>
            <person name="Muller H."/>
            <person name="Nicaud J.-M."/>
            <person name="Nikolski M."/>
            <person name="Oztas S."/>
            <person name="Ozier-Kalogeropoulos O."/>
            <person name="Pellenz S."/>
            <person name="Potier S."/>
            <person name="Richard G.-F."/>
            <person name="Straub M.-L."/>
            <person name="Suleau A."/>
            <person name="Swennen D."/>
            <person name="Tekaia F."/>
            <person name="Wesolowski-Louvel M."/>
            <person name="Westhof E."/>
            <person name="Wirth B."/>
            <person name="Zeniou-Meyer M."/>
            <person name="Zivanovic Y."/>
            <person name="Bolotin-Fukuhara M."/>
            <person name="Thierry A."/>
            <person name="Bouchier C."/>
            <person name="Caudron B."/>
            <person name="Scarpelli C."/>
            <person name="Gaillardin C."/>
            <person name="Weissenbach J."/>
            <person name="Wincker P."/>
            <person name="Souciet J.-L."/>
        </authorList>
    </citation>
    <scope>NUCLEOTIDE SEQUENCE [LARGE SCALE GENOMIC DNA]</scope>
    <source>
        <strain>CLIB 122 / E 150</strain>
    </source>
</reference>
<protein>
    <recommendedName>
        <fullName evidence="2">Small ribosomal subunit protein mS23</fullName>
    </recommendedName>
    <alternativeName>
        <fullName>37S ribosomal protein S25, mitochondrial</fullName>
    </alternativeName>
</protein>
<feature type="chain" id="PRO_0000343563" description="Small ribosomal subunit protein mS23">
    <location>
        <begin position="1"/>
        <end position="229"/>
    </location>
</feature>
<accession>Q6CAD1</accession>
<keyword id="KW-0496">Mitochondrion</keyword>
<keyword id="KW-1185">Reference proteome</keyword>
<keyword id="KW-0687">Ribonucleoprotein</keyword>
<keyword id="KW-0689">Ribosomal protein</keyword>
<evidence type="ECO:0000250" key="1"/>
<evidence type="ECO:0000305" key="2"/>
<name>RT25_YARLI</name>
<comment type="subunit">
    <text evidence="1">Component of the mitochondrial small ribosomal subunit.</text>
</comment>
<comment type="subcellular location">
    <subcellularLocation>
        <location evidence="1">Mitochondrion</location>
    </subcellularLocation>
</comment>
<comment type="similarity">
    <text evidence="2">Belongs to the mitochondrion-specific ribosomal protein mS23 family.</text>
</comment>
<sequence>MSQRIKTAAVDIVHITSGRIASGMLSHEPIWYRAMAANMPTTVYQHKPHFEKLARIAQRESEKLNEFIKTRSKPVRVRTRHLYEPVHLKFMEDEIREIFYKQHPWELARPKLIVENSGDDHVTQDWSKMYQANKKLDGESVVQRTIYLLGEKKTHDQKALLEAYDKARFEFYKLRMAEDVQNVTAAEEADMFGACFSTSSVERNLFHEQKRIEDWKEKAVEMTLDMGAK</sequence>
<dbReference type="EMBL" id="CR382130">
    <property type="protein sequence ID" value="CAG80569.1"/>
    <property type="molecule type" value="Genomic_DNA"/>
</dbReference>
<dbReference type="RefSeq" id="XP_502381.1">
    <property type="nucleotide sequence ID" value="XM_502381.1"/>
</dbReference>
<dbReference type="SMR" id="Q6CAD1"/>
<dbReference type="FunCoup" id="Q6CAD1">
    <property type="interactions" value="153"/>
</dbReference>
<dbReference type="STRING" id="284591.Q6CAD1"/>
<dbReference type="EnsemblFungi" id="CAG80569">
    <property type="protein sequence ID" value="CAG80569"/>
    <property type="gene ID" value="YALI0_D03916g"/>
</dbReference>
<dbReference type="KEGG" id="yli:2910593"/>
<dbReference type="VEuPathDB" id="FungiDB:YALI0_D03916g"/>
<dbReference type="HOGENOM" id="CLU_081350_0_0_1"/>
<dbReference type="InParanoid" id="Q6CAD1"/>
<dbReference type="OMA" id="WELARPQ"/>
<dbReference type="OrthoDB" id="107116at4891"/>
<dbReference type="Proteomes" id="UP000001300">
    <property type="component" value="Chromosome D"/>
</dbReference>
<dbReference type="GO" id="GO:0005763">
    <property type="term" value="C:mitochondrial small ribosomal subunit"/>
    <property type="evidence" value="ECO:0007669"/>
    <property type="project" value="EnsemblFungi"/>
</dbReference>
<dbReference type="GO" id="GO:0005739">
    <property type="term" value="C:mitochondrion"/>
    <property type="evidence" value="ECO:0000318"/>
    <property type="project" value="GO_Central"/>
</dbReference>
<dbReference type="GO" id="GO:0003735">
    <property type="term" value="F:structural constituent of ribosome"/>
    <property type="evidence" value="ECO:0007669"/>
    <property type="project" value="EnsemblFungi"/>
</dbReference>
<dbReference type="InterPro" id="IPR016939">
    <property type="entry name" value="Ribosomal_mS23_fun"/>
</dbReference>
<dbReference type="PANTHER" id="PTHR37799">
    <property type="entry name" value="37S RIBOSOMAL PROTEIN S25, MITOCHONDRIAL"/>
    <property type="match status" value="1"/>
</dbReference>
<dbReference type="PANTHER" id="PTHR37799:SF1">
    <property type="entry name" value="SMALL RIBOSOMAL SUBUNIT PROTEIN MS23"/>
    <property type="match status" value="1"/>
</dbReference>
<dbReference type="Pfam" id="PF13741">
    <property type="entry name" value="MRP-S25"/>
    <property type="match status" value="1"/>
</dbReference>
<dbReference type="PIRSF" id="PIRSF029764">
    <property type="entry name" value="RSM25"/>
    <property type="match status" value="1"/>
</dbReference>
<organism>
    <name type="scientific">Yarrowia lipolytica (strain CLIB 122 / E 150)</name>
    <name type="common">Yeast</name>
    <name type="synonym">Candida lipolytica</name>
    <dbReference type="NCBI Taxonomy" id="284591"/>
    <lineage>
        <taxon>Eukaryota</taxon>
        <taxon>Fungi</taxon>
        <taxon>Dikarya</taxon>
        <taxon>Ascomycota</taxon>
        <taxon>Saccharomycotina</taxon>
        <taxon>Dipodascomycetes</taxon>
        <taxon>Dipodascales</taxon>
        <taxon>Dipodascales incertae sedis</taxon>
        <taxon>Yarrowia</taxon>
    </lineage>
</organism>